<evidence type="ECO:0000250" key="1"/>
<evidence type="ECO:0000250" key="2">
    <source>
        <dbReference type="UniProtKB" id="Q9BYT9"/>
    </source>
</evidence>
<evidence type="ECO:0000255" key="3"/>
<evidence type="ECO:0000256" key="4">
    <source>
        <dbReference type="SAM" id="MobiDB-lite"/>
    </source>
</evidence>
<evidence type="ECO:0000269" key="5">
    <source>
    </source>
</evidence>
<evidence type="ECO:0000269" key="6">
    <source>
    </source>
</evidence>
<evidence type="ECO:0000269" key="7">
    <source>
    </source>
</evidence>
<evidence type="ECO:0000269" key="8">
    <source>
    </source>
</evidence>
<evidence type="ECO:0000305" key="9"/>
<evidence type="ECO:0000305" key="10">
    <source>
    </source>
</evidence>
<evidence type="ECO:0000312" key="11">
    <source>
        <dbReference type="EMBL" id="CAM25697.1"/>
    </source>
</evidence>
<evidence type="ECO:0000312" key="12">
    <source>
        <dbReference type="MGI" id="MGI:3613666"/>
    </source>
</evidence>
<keyword id="KW-0025">Alternative splicing</keyword>
<keyword id="KW-1003">Cell membrane</keyword>
<keyword id="KW-0325">Glycoprotein</keyword>
<keyword id="KW-0445">Lipid transport</keyword>
<keyword id="KW-0472">Membrane</keyword>
<keyword id="KW-1185">Reference proteome</keyword>
<keyword id="KW-0812">Transmembrane</keyword>
<keyword id="KW-1133">Transmembrane helix</keyword>
<keyword id="KW-0813">Transport</keyword>
<proteinExistence type="evidence at protein level"/>
<organism>
    <name type="scientific">Mus musculus</name>
    <name type="common">Mouse</name>
    <dbReference type="NCBI Taxonomy" id="10090"/>
    <lineage>
        <taxon>Eukaryota</taxon>
        <taxon>Metazoa</taxon>
        <taxon>Chordata</taxon>
        <taxon>Craniata</taxon>
        <taxon>Vertebrata</taxon>
        <taxon>Euteleostomi</taxon>
        <taxon>Mammalia</taxon>
        <taxon>Eutheria</taxon>
        <taxon>Euarchontoglires</taxon>
        <taxon>Glires</taxon>
        <taxon>Rodentia</taxon>
        <taxon>Myomorpha</taxon>
        <taxon>Muroidea</taxon>
        <taxon>Muridae</taxon>
        <taxon>Murinae</taxon>
        <taxon>Mus</taxon>
        <taxon>Mus</taxon>
    </lineage>
</organism>
<reference key="1">
    <citation type="journal article" date="2009" name="PLoS Biol.">
        <title>Lineage-specific biology revealed by a finished genome assembly of the mouse.</title>
        <authorList>
            <person name="Church D.M."/>
            <person name="Goodstadt L."/>
            <person name="Hillier L.W."/>
            <person name="Zody M.C."/>
            <person name="Goldstein S."/>
            <person name="She X."/>
            <person name="Bult C.J."/>
            <person name="Agarwala R."/>
            <person name="Cherry J.L."/>
            <person name="DiCuccio M."/>
            <person name="Hlavina W."/>
            <person name="Kapustin Y."/>
            <person name="Meric P."/>
            <person name="Maglott D."/>
            <person name="Birtle Z."/>
            <person name="Marques A.C."/>
            <person name="Graves T."/>
            <person name="Zhou S."/>
            <person name="Teague B."/>
            <person name="Potamousis K."/>
            <person name="Churas C."/>
            <person name="Place M."/>
            <person name="Herschleb J."/>
            <person name="Runnheim R."/>
            <person name="Forrest D."/>
            <person name="Amos-Landgraf J."/>
            <person name="Schwartz D.C."/>
            <person name="Cheng Z."/>
            <person name="Lindblad-Toh K."/>
            <person name="Eichler E.E."/>
            <person name="Ponting C.P."/>
        </authorList>
    </citation>
    <scope>NUCLEOTIDE SEQUENCE [LARGE SCALE GENOMIC DNA]</scope>
    <source>
        <strain>C57BL/6J</strain>
    </source>
</reference>
<reference evidence="9" key="2">
    <citation type="journal article" date="2008" name="Dev. Dyn.">
        <title>Expression of TMEM16 paralogs during murine embryogenesis.</title>
        <authorList>
            <person name="Rock J.R."/>
            <person name="Harfe B.D."/>
        </authorList>
    </citation>
    <scope>DEVELOPMENTAL STAGE</scope>
</reference>
<reference key="3">
    <citation type="journal article" date="2010" name="J. Biol. Chem.">
        <title>Expression and function of epithelial anoctamins.</title>
        <authorList>
            <person name="Schreiber R."/>
            <person name="Uliyakina I."/>
            <person name="Kongsuphol P."/>
            <person name="Warth R."/>
            <person name="Mirza M."/>
            <person name="Martins J.R."/>
            <person name="Kunzelmann K."/>
        </authorList>
    </citation>
    <scope>TISSUE SPECIFICITY</scope>
</reference>
<reference key="4">
    <citation type="journal article" date="2012" name="Exp. Physiol.">
        <title>The anoctamin (TMEM16) gene family: calcium-activated chloride channels come of age.</title>
        <authorList>
            <person name="Winpenny J.P."/>
            <person name="Gray M.A."/>
        </authorList>
    </citation>
    <scope>REVIEW</scope>
</reference>
<reference key="5">
    <citation type="journal article" date="2013" name="J. Biol. Chem.">
        <title>Calcium-dependent phospholipid scramblase activity of TMEM16 protein family members.</title>
        <authorList>
            <person name="Suzuki J."/>
            <person name="Fujii T."/>
            <person name="Imao T."/>
            <person name="Ishihara K."/>
            <person name="Kuba H."/>
            <person name="Nagata S."/>
        </authorList>
    </citation>
    <scope>FUNCTION</scope>
    <scope>CATALYTIC ACTIVITY</scope>
    <scope>TISSUE SPECIFICITY</scope>
</reference>
<reference key="6">
    <citation type="journal article" date="2013" name="Nat. Neurosci.">
        <title>TMEM16C facilitates Na(+)-activated K+ currents in rat sensory neurons and regulates pain processing.</title>
        <authorList>
            <person name="Huang F."/>
            <person name="Wang X."/>
            <person name="Ostertag E.M."/>
            <person name="Nuwal T."/>
            <person name="Huang B."/>
            <person name="Jan Y.N."/>
            <person name="Basbaum A.I."/>
            <person name="Jan L.Y."/>
        </authorList>
    </citation>
    <scope>FUNCTION</scope>
    <scope>INTERACTION WITH KCNT1</scope>
</reference>
<protein>
    <recommendedName>
        <fullName evidence="2">Anoctamin-3</fullName>
    </recommendedName>
    <alternativeName>
        <fullName evidence="11">Transmembrane protein 16C</fullName>
    </alternativeName>
</protein>
<comment type="function">
    <text evidence="7 8">Has calcium-dependent phospholipid scramblase activity; scrambles phosphatidylcholine and galactosylceramide (PubMed:23532839). Does not exhibit calcium-activated chloride channel (CaCC) activity (PubMed:23532839). Seems to act as potassium channel regulator and may inhibit pain signaling; can facilitate KCNT1/Slack channel activity by promoting its full single-channel conductance at very low sodium concentrations and by increasing its sodium sensitivity (PubMed:23872594).</text>
</comment>
<comment type="catalytic activity">
    <reaction evidence="7">
        <text>a 1,2-diacyl-sn-glycero-3-phosphocholine(in) = a 1,2-diacyl-sn-glycero-3-phosphocholine(out)</text>
        <dbReference type="Rhea" id="RHEA:38571"/>
        <dbReference type="ChEBI" id="CHEBI:57643"/>
    </reaction>
    <physiologicalReaction direction="right-to-left" evidence="10">
        <dbReference type="Rhea" id="RHEA:38573"/>
    </physiologicalReaction>
</comment>
<comment type="catalytic activity">
    <reaction evidence="7">
        <text>a beta-D-galactosyl-(1&lt;-&gt;1')-N-acylsphing-4-enine(out) = a beta-D-galactosyl-(1&lt;-&gt;1')-N-acylsphing-4-enine(in)</text>
        <dbReference type="Rhea" id="RHEA:38899"/>
        <dbReference type="ChEBI" id="CHEBI:18390"/>
    </reaction>
    <physiologicalReaction direction="left-to-right" evidence="10">
        <dbReference type="Rhea" id="RHEA:38900"/>
    </physiologicalReaction>
</comment>
<comment type="subunit">
    <text evidence="8">Interacts with KCNT1/Slack.</text>
</comment>
<comment type="subcellular location">
    <subcellularLocation>
        <location evidence="9">Cell membrane</location>
        <topology evidence="3">Multi-pass membrane protein</topology>
    </subcellularLocation>
    <text evidence="1">Shows an intracellular localization.</text>
</comment>
<comment type="alternative products">
    <event type="alternative splicing"/>
    <isoform>
        <id>A2AHL1-1</id>
        <name>1</name>
        <sequence type="displayed"/>
    </isoform>
    <isoform>
        <id>A2AHL1-2</id>
        <name>2</name>
        <sequence type="described" ref="VSP_052958 VSP_052959"/>
    </isoform>
</comment>
<comment type="tissue specificity">
    <text evidence="6 7">Predominantly expressed in neuronal tissues. Expressed in brain.</text>
</comment>
<comment type="developmental stage">
    <text evidence="5">In the developing gastrointestinal tract, expressed in the intestinal epithelium at 14.5 dpc and in an incomplete ring of cells in the mesenchyme of the esophagus, stomach and small intestine at 16.5 dpc. In the developing skeleton, expressed in the perichondria of the neural arch of developing vertebrae at 14.5 dpc and 16.5 dpc. At 14.5 dpc, also expressed in perichondria of developing ribs. At 14.5 dpc and 16.5 dpc, detected in dorsal root ganglia and neural tube. In developing skin, expression is detected in the most suprabasal layers at 16.5 dpc. Not detected in the lung at 14.5 dpc or 16.5 dpc.</text>
</comment>
<comment type="miscellaneous">
    <text>The term 'anoctamin' was coined because these channels are anion selective and have eight (OCT) transmembrane segments. There is some dissatisfaction in the field with the Ano nomenclature because it is not certain that all the members of this family are anion channels or have the 8-transmembrane topology.</text>
</comment>
<comment type="similarity">
    <text evidence="2">Belongs to the anoctamin family.</text>
</comment>
<accession>A2AHL1</accession>
<accession>A2AHL0</accession>
<sequence length="981" mass="114568">MVHHSGSIQSFKQQKGMNISKSEITTEASLKPSRRSLPCLAQSYAHSKSLSQSASLFQSTESESQAPTSVTFLSADKPEHVTSEESRKDSTLKCSFADLSDFCLALGKDKDYLDESEHANYDRSRLLNDFVTKDKPASKTKLSKNDMSYIASSGLLFKDGKKRIDYILVYRKTNIQYDKRNTFEKNLRAEGLMLEKEPAIANPDIMFIKIHIPWDTLCKYAERLNIRVPFRKKCYYTDQKNKSKSRVQNYFKRIKKWMSQNPMVLDKSAFPELEESDCYTGPFSRARIHHFIINNKDTFFSNATRSRIVYHMLERTKYENGISKVGIRKLITNGSYIAAFPPHEGAYKSSLPIKTHGPQNNRHLLYERWARWGMWYKHQPLDLIRMYFGEKIGLYFAWLGWYTGMLIPAAVVGLCVFFYGLVTMNESQVSQEICKATEVFMCPLCDKNCSLQRLNDSCIYAKVTYLFDNGGTVFFAIFMAIWATVFLEFWKRRRSILTYTWDLIEWEEEEETLRPQFEAKYYRMEVINPITGKPEPHQPSSDKVTRLLVSVSGIFFMISLVITAVFAVVVYRLVVMEQFASFKWNFVKQHWQFATSGAAVCINFIIIMLLNLAYEKIAYLLTNLEYPRTESEWENSFALKMFLFQFVNLNSSIFYIAFFLGRFVGHPGKYNKLFERWRLEECHPSGCLIDLCLQMGVIMFLKQIWNNFMELGYPLIQNWWSRHKIKRGIQDASIPQWENDWNLQPMNIHGLMDEYLEMVLQFGFTTIFVAAFPLAPLLALLNNIIEIRLDAYKFVTQWRRPLPARATDIGIWLGILEGIGILAVITNAFVIAITSDYIPRFVYEYKYGPCANHVKQNENCLKGYVNNSLSFFDLSELGMGKSGYCRYRDYRGPPWSSKPYEFTLQYWHILAARLAFIIVFEHLVFGIKSFIAYLIPDIPKGLRERIRREKYLVQEMMYEAELEHLQQQRRKSGQPIHHEWP</sequence>
<gene>
    <name evidence="2" type="primary">Ano3</name>
    <name evidence="11 12" type="synonym">Tmem16c</name>
</gene>
<feature type="chain" id="PRO_0000353188" description="Anoctamin-3">
    <location>
        <begin position="1"/>
        <end position="981"/>
    </location>
</feature>
<feature type="topological domain" description="Cytoplasmic" evidence="3">
    <location>
        <begin position="1"/>
        <end position="403"/>
    </location>
</feature>
<feature type="transmembrane region" description="Helical" evidence="3">
    <location>
        <begin position="404"/>
        <end position="424"/>
    </location>
</feature>
<feature type="topological domain" description="Extracellular" evidence="3">
    <location>
        <begin position="425"/>
        <end position="469"/>
    </location>
</feature>
<feature type="transmembrane region" description="Helical" evidence="3">
    <location>
        <begin position="470"/>
        <end position="490"/>
    </location>
</feature>
<feature type="topological domain" description="Cytoplasmic" evidence="3">
    <location>
        <begin position="491"/>
        <end position="550"/>
    </location>
</feature>
<feature type="transmembrane region" description="Helical" evidence="3">
    <location>
        <begin position="551"/>
        <end position="571"/>
    </location>
</feature>
<feature type="topological domain" description="Extracellular" evidence="3">
    <location>
        <begin position="572"/>
        <end position="592"/>
    </location>
</feature>
<feature type="transmembrane region" description="Helical" evidence="3">
    <location>
        <begin position="593"/>
        <end position="613"/>
    </location>
</feature>
<feature type="topological domain" description="Cytoplasmic" evidence="3">
    <location>
        <begin position="614"/>
        <end position="640"/>
    </location>
</feature>
<feature type="transmembrane region" description="Helical" evidence="3">
    <location>
        <begin position="641"/>
        <end position="661"/>
    </location>
</feature>
<feature type="topological domain" description="Extracellular" evidence="3">
    <location>
        <begin position="662"/>
        <end position="761"/>
    </location>
</feature>
<feature type="transmembrane region" description="Helical" evidence="3">
    <location>
        <begin position="762"/>
        <end position="782"/>
    </location>
</feature>
<feature type="topological domain" description="Cytoplasmic" evidence="3">
    <location>
        <begin position="783"/>
        <end position="810"/>
    </location>
</feature>
<feature type="transmembrane region" description="Helical" evidence="3">
    <location>
        <begin position="811"/>
        <end position="831"/>
    </location>
</feature>
<feature type="topological domain" description="Extracellular" evidence="3">
    <location>
        <begin position="832"/>
        <end position="914"/>
    </location>
</feature>
<feature type="transmembrane region" description="Helical" evidence="3">
    <location>
        <begin position="915"/>
        <end position="935"/>
    </location>
</feature>
<feature type="topological domain" description="Cytoplasmic" evidence="3">
    <location>
        <begin position="936"/>
        <end position="981"/>
    </location>
</feature>
<feature type="region of interest" description="Disordered" evidence="4">
    <location>
        <begin position="1"/>
        <end position="32"/>
    </location>
</feature>
<feature type="region of interest" description="Disordered" evidence="4">
    <location>
        <begin position="67"/>
        <end position="87"/>
    </location>
</feature>
<feature type="compositionally biased region" description="Polar residues" evidence="4">
    <location>
        <begin position="1"/>
        <end position="28"/>
    </location>
</feature>
<feature type="compositionally biased region" description="Basic and acidic residues" evidence="4">
    <location>
        <begin position="76"/>
        <end position="87"/>
    </location>
</feature>
<feature type="glycosylation site" description="N-linked (GlcNAc...) asparagine" evidence="3">
    <location>
        <position position="425"/>
    </location>
</feature>
<feature type="glycosylation site" description="N-linked (GlcNAc...) asparagine" evidence="3">
    <location>
        <position position="448"/>
    </location>
</feature>
<feature type="glycosylation site" description="N-linked (GlcNAc...) asparagine" evidence="3">
    <location>
        <position position="455"/>
    </location>
</feature>
<feature type="glycosylation site" description="N-linked (GlcNAc...) asparagine" evidence="3">
    <location>
        <position position="866"/>
    </location>
</feature>
<feature type="splice variant" id="VSP_052958" description="In isoform 2." evidence="9">
    <original>EYPRTESEWENSF</original>
    <variation>GKFIFLILLVVSK</variation>
    <location>
        <begin position="625"/>
        <end position="637"/>
    </location>
</feature>
<feature type="splice variant" id="VSP_052959" description="In isoform 2." evidence="9">
    <location>
        <begin position="638"/>
        <end position="981"/>
    </location>
</feature>
<name>ANO3_MOUSE</name>
<dbReference type="EMBL" id="AL731700">
    <property type="protein sequence ID" value="CAM18324.1"/>
    <property type="molecule type" value="Genomic_DNA"/>
</dbReference>
<dbReference type="EMBL" id="AL731779">
    <property type="protein sequence ID" value="CAM18324.1"/>
    <property type="status" value="JOINED"/>
    <property type="molecule type" value="Genomic_DNA"/>
</dbReference>
<dbReference type="EMBL" id="AL731700">
    <property type="protein sequence ID" value="CAM18325.1"/>
    <property type="molecule type" value="Genomic_DNA"/>
</dbReference>
<dbReference type="EMBL" id="AL731779">
    <property type="protein sequence ID" value="CAM18325.1"/>
    <property type="status" value="JOINED"/>
    <property type="molecule type" value="Genomic_DNA"/>
</dbReference>
<dbReference type="EMBL" id="BX005257">
    <property type="protein sequence ID" value="CAM18325.1"/>
    <property type="status" value="JOINED"/>
    <property type="molecule type" value="Genomic_DNA"/>
</dbReference>
<dbReference type="EMBL" id="AL731779">
    <property type="protein sequence ID" value="CAM25696.1"/>
    <property type="molecule type" value="Genomic_DNA"/>
</dbReference>
<dbReference type="EMBL" id="AL731700">
    <property type="protein sequence ID" value="CAM25696.1"/>
    <property type="status" value="JOINED"/>
    <property type="molecule type" value="Genomic_DNA"/>
</dbReference>
<dbReference type="EMBL" id="AL731779">
    <property type="protein sequence ID" value="CAM25697.1"/>
    <property type="molecule type" value="Genomic_DNA"/>
</dbReference>
<dbReference type="EMBL" id="AL731700">
    <property type="protein sequence ID" value="CAM25697.1"/>
    <property type="status" value="JOINED"/>
    <property type="molecule type" value="Genomic_DNA"/>
</dbReference>
<dbReference type="EMBL" id="BX005257">
    <property type="protein sequence ID" value="CAM25697.1"/>
    <property type="status" value="JOINED"/>
    <property type="molecule type" value="Genomic_DNA"/>
</dbReference>
<dbReference type="EMBL" id="BX005257">
    <property type="protein sequence ID" value="CAM27817.1"/>
    <property type="molecule type" value="Genomic_DNA"/>
</dbReference>
<dbReference type="EMBL" id="AL731700">
    <property type="protein sequence ID" value="CAM27817.1"/>
    <property type="status" value="JOINED"/>
    <property type="molecule type" value="Genomic_DNA"/>
</dbReference>
<dbReference type="EMBL" id="AL731779">
    <property type="protein sequence ID" value="CAM27817.1"/>
    <property type="status" value="JOINED"/>
    <property type="molecule type" value="Genomic_DNA"/>
</dbReference>
<dbReference type="CCDS" id="CCDS50658.1">
    <molecule id="A2AHL1-1"/>
</dbReference>
<dbReference type="RefSeq" id="NP_001121575.1">
    <molecule id="A2AHL1-1"/>
    <property type="nucleotide sequence ID" value="NM_001128103.2"/>
</dbReference>
<dbReference type="RefSeq" id="NP_001342174.1">
    <molecule id="A2AHL1-2"/>
    <property type="nucleotide sequence ID" value="NM_001355245.1"/>
</dbReference>
<dbReference type="SMR" id="A2AHL1"/>
<dbReference type="BioGRID" id="230734">
    <property type="interactions" value="4"/>
</dbReference>
<dbReference type="FunCoup" id="A2AHL1">
    <property type="interactions" value="352"/>
</dbReference>
<dbReference type="STRING" id="10090.ENSMUSP00000097219"/>
<dbReference type="SwissLipids" id="SLP:000000377"/>
<dbReference type="GlyCosmos" id="A2AHL1">
    <property type="glycosylation" value="4 sites, No reported glycans"/>
</dbReference>
<dbReference type="GlyGen" id="A2AHL1">
    <property type="glycosylation" value="4 sites, 2 N-linked glycans (2 sites)"/>
</dbReference>
<dbReference type="iPTMnet" id="A2AHL1"/>
<dbReference type="PhosphoSitePlus" id="A2AHL1"/>
<dbReference type="jPOST" id="A2AHL1"/>
<dbReference type="PaxDb" id="10090-ENSMUSP00000097219"/>
<dbReference type="ProteomicsDB" id="282108">
    <molecule id="A2AHL1-1"/>
</dbReference>
<dbReference type="ProteomicsDB" id="282109">
    <molecule id="A2AHL1-2"/>
</dbReference>
<dbReference type="Antibodypedia" id="25359">
    <property type="antibodies" value="109 antibodies from 25 providers"/>
</dbReference>
<dbReference type="Ensembl" id="ENSMUST00000099623.10">
    <molecule id="A2AHL1-1"/>
    <property type="protein sequence ID" value="ENSMUSP00000097219.4"/>
    <property type="gene ID" value="ENSMUSG00000074968.12"/>
</dbReference>
<dbReference type="GeneID" id="228432"/>
<dbReference type="KEGG" id="mmu:228432"/>
<dbReference type="UCSC" id="uc008lmy.1">
    <molecule id="A2AHL1-2"/>
    <property type="organism name" value="mouse"/>
</dbReference>
<dbReference type="UCSC" id="uc012caw.2">
    <molecule id="A2AHL1-1"/>
    <property type="organism name" value="mouse"/>
</dbReference>
<dbReference type="AGR" id="MGI:3613666"/>
<dbReference type="CTD" id="63982"/>
<dbReference type="MGI" id="MGI:3613666">
    <property type="gene designation" value="Ano3"/>
</dbReference>
<dbReference type="VEuPathDB" id="HostDB:ENSMUSG00000074968"/>
<dbReference type="eggNOG" id="KOG2514">
    <property type="taxonomic scope" value="Eukaryota"/>
</dbReference>
<dbReference type="GeneTree" id="ENSGT00940000156257"/>
<dbReference type="HOGENOM" id="CLU_006685_1_3_1"/>
<dbReference type="InParanoid" id="A2AHL1"/>
<dbReference type="OMA" id="TMGRNMR"/>
<dbReference type="OrthoDB" id="296386at2759"/>
<dbReference type="PhylomeDB" id="A2AHL1"/>
<dbReference type="TreeFam" id="TF314265"/>
<dbReference type="Reactome" id="R-MMU-2672351">
    <property type="pathway name" value="Stimuli-sensing channels"/>
</dbReference>
<dbReference type="BioGRID-ORCS" id="228432">
    <property type="hits" value="4 hits in 76 CRISPR screens"/>
</dbReference>
<dbReference type="ChiTaRS" id="Ano3">
    <property type="organism name" value="mouse"/>
</dbReference>
<dbReference type="PRO" id="PR:A2AHL1"/>
<dbReference type="Proteomes" id="UP000000589">
    <property type="component" value="Chromosome 2"/>
</dbReference>
<dbReference type="RNAct" id="A2AHL1">
    <property type="molecule type" value="protein"/>
</dbReference>
<dbReference type="Bgee" id="ENSMUSG00000074968">
    <property type="expression patterns" value="Expressed in caudate-putamen and 97 other cell types or tissues"/>
</dbReference>
<dbReference type="ExpressionAtlas" id="A2AHL1">
    <property type="expression patterns" value="baseline and differential"/>
</dbReference>
<dbReference type="GO" id="GO:0005886">
    <property type="term" value="C:plasma membrane"/>
    <property type="evidence" value="ECO:0007669"/>
    <property type="project" value="UniProtKB-SubCell"/>
</dbReference>
<dbReference type="GO" id="GO:0017128">
    <property type="term" value="F:phospholipid scramblase activity"/>
    <property type="evidence" value="ECO:0000314"/>
    <property type="project" value="MGI"/>
</dbReference>
<dbReference type="GO" id="GO:0046983">
    <property type="term" value="F:protein dimerization activity"/>
    <property type="evidence" value="ECO:0007669"/>
    <property type="project" value="InterPro"/>
</dbReference>
<dbReference type="GO" id="GO:0061591">
    <property type="term" value="P:calcium activated galactosylceramide scrambling"/>
    <property type="evidence" value="ECO:0000314"/>
    <property type="project" value="MGI"/>
</dbReference>
<dbReference type="GO" id="GO:0061590">
    <property type="term" value="P:calcium activated phosphatidylcholine scrambling"/>
    <property type="evidence" value="ECO:0000314"/>
    <property type="project" value="MGI"/>
</dbReference>
<dbReference type="GO" id="GO:0050982">
    <property type="term" value="P:detection of mechanical stimulus"/>
    <property type="evidence" value="ECO:0007669"/>
    <property type="project" value="Ensembl"/>
</dbReference>
<dbReference type="GO" id="GO:0016048">
    <property type="term" value="P:detection of temperature stimulus"/>
    <property type="evidence" value="ECO:0007669"/>
    <property type="project" value="Ensembl"/>
</dbReference>
<dbReference type="GO" id="GO:0051649">
    <property type="term" value="P:establishment of localization in cell"/>
    <property type="evidence" value="ECO:0000314"/>
    <property type="project" value="MGI"/>
</dbReference>
<dbReference type="InterPro" id="IPR032394">
    <property type="entry name" value="Anoct_dimer"/>
</dbReference>
<dbReference type="InterPro" id="IPR007632">
    <property type="entry name" value="Anoctamin"/>
</dbReference>
<dbReference type="InterPro" id="IPR049452">
    <property type="entry name" value="Anoctamin_TM"/>
</dbReference>
<dbReference type="PANTHER" id="PTHR12308">
    <property type="entry name" value="ANOCTAMIN"/>
    <property type="match status" value="1"/>
</dbReference>
<dbReference type="PANTHER" id="PTHR12308:SF16">
    <property type="entry name" value="ANOCTAMIN-3"/>
    <property type="match status" value="1"/>
</dbReference>
<dbReference type="Pfam" id="PF16178">
    <property type="entry name" value="Anoct_dimer"/>
    <property type="match status" value="1"/>
</dbReference>
<dbReference type="Pfam" id="PF04547">
    <property type="entry name" value="Anoctamin"/>
    <property type="match status" value="1"/>
</dbReference>